<protein>
    <recommendedName>
        <fullName evidence="1">DNA-directed RNA polymerase subunit beta'</fullName>
        <shortName evidence="1">RNAP subunit beta'</shortName>
        <ecNumber evidence="1">2.7.7.6</ecNumber>
    </recommendedName>
    <alternativeName>
        <fullName evidence="1">RNA polymerase subunit beta'</fullName>
    </alternativeName>
    <alternativeName>
        <fullName evidence="1">Transcriptase subunit beta'</fullName>
    </alternativeName>
</protein>
<reference key="1">
    <citation type="journal article" date="2008" name="Genome Res.">
        <title>Genome sequence of the beta-rhizobium Cupriavidus taiwanensis and comparative genomics of rhizobia.</title>
        <authorList>
            <person name="Amadou C."/>
            <person name="Pascal G."/>
            <person name="Mangenot S."/>
            <person name="Glew M."/>
            <person name="Bontemps C."/>
            <person name="Capela D."/>
            <person name="Carrere S."/>
            <person name="Cruveiller S."/>
            <person name="Dossat C."/>
            <person name="Lajus A."/>
            <person name="Marchetti M."/>
            <person name="Poinsot V."/>
            <person name="Rouy Z."/>
            <person name="Servin B."/>
            <person name="Saad M."/>
            <person name="Schenowitz C."/>
            <person name="Barbe V."/>
            <person name="Batut J."/>
            <person name="Medigue C."/>
            <person name="Masson-Boivin C."/>
        </authorList>
    </citation>
    <scope>NUCLEOTIDE SEQUENCE [LARGE SCALE GENOMIC DNA]</scope>
    <source>
        <strain>DSM 17343 / BCRC 17206 / CCUG 44338 / CIP 107171 / LMG 19424 / R1</strain>
    </source>
</reference>
<accession>B3R7T5</accession>
<keyword id="KW-0240">DNA-directed RNA polymerase</keyword>
<keyword id="KW-0460">Magnesium</keyword>
<keyword id="KW-0479">Metal-binding</keyword>
<keyword id="KW-0548">Nucleotidyltransferase</keyword>
<keyword id="KW-0804">Transcription</keyword>
<keyword id="KW-0808">Transferase</keyword>
<keyword id="KW-0862">Zinc</keyword>
<feature type="chain" id="PRO_0000353343" description="DNA-directed RNA polymerase subunit beta'">
    <location>
        <begin position="1"/>
        <end position="1414"/>
    </location>
</feature>
<feature type="binding site" evidence="1">
    <location>
        <position position="70"/>
    </location>
    <ligand>
        <name>Zn(2+)</name>
        <dbReference type="ChEBI" id="CHEBI:29105"/>
        <label>1</label>
    </ligand>
</feature>
<feature type="binding site" evidence="1">
    <location>
        <position position="72"/>
    </location>
    <ligand>
        <name>Zn(2+)</name>
        <dbReference type="ChEBI" id="CHEBI:29105"/>
        <label>1</label>
    </ligand>
</feature>
<feature type="binding site" evidence="1">
    <location>
        <position position="85"/>
    </location>
    <ligand>
        <name>Zn(2+)</name>
        <dbReference type="ChEBI" id="CHEBI:29105"/>
        <label>1</label>
    </ligand>
</feature>
<feature type="binding site" evidence="1">
    <location>
        <position position="88"/>
    </location>
    <ligand>
        <name>Zn(2+)</name>
        <dbReference type="ChEBI" id="CHEBI:29105"/>
        <label>1</label>
    </ligand>
</feature>
<feature type="binding site" evidence="1">
    <location>
        <position position="461"/>
    </location>
    <ligand>
        <name>Mg(2+)</name>
        <dbReference type="ChEBI" id="CHEBI:18420"/>
    </ligand>
</feature>
<feature type="binding site" evidence="1">
    <location>
        <position position="463"/>
    </location>
    <ligand>
        <name>Mg(2+)</name>
        <dbReference type="ChEBI" id="CHEBI:18420"/>
    </ligand>
</feature>
<feature type="binding site" evidence="1">
    <location>
        <position position="465"/>
    </location>
    <ligand>
        <name>Mg(2+)</name>
        <dbReference type="ChEBI" id="CHEBI:18420"/>
    </ligand>
</feature>
<feature type="binding site" evidence="1">
    <location>
        <position position="820"/>
    </location>
    <ligand>
        <name>Zn(2+)</name>
        <dbReference type="ChEBI" id="CHEBI:29105"/>
        <label>2</label>
    </ligand>
</feature>
<feature type="binding site" evidence="1">
    <location>
        <position position="894"/>
    </location>
    <ligand>
        <name>Zn(2+)</name>
        <dbReference type="ChEBI" id="CHEBI:29105"/>
        <label>2</label>
    </ligand>
</feature>
<feature type="binding site" evidence="1">
    <location>
        <position position="901"/>
    </location>
    <ligand>
        <name>Zn(2+)</name>
        <dbReference type="ChEBI" id="CHEBI:29105"/>
        <label>2</label>
    </ligand>
</feature>
<feature type="binding site" evidence="1">
    <location>
        <position position="904"/>
    </location>
    <ligand>
        <name>Zn(2+)</name>
        <dbReference type="ChEBI" id="CHEBI:29105"/>
        <label>2</label>
    </ligand>
</feature>
<proteinExistence type="inferred from homology"/>
<organism>
    <name type="scientific">Cupriavidus taiwanensis (strain DSM 17343 / BCRC 17206 / CCUG 44338 / CIP 107171 / LMG 19424 / R1)</name>
    <name type="common">Ralstonia taiwanensis (strain LMG 19424)</name>
    <dbReference type="NCBI Taxonomy" id="977880"/>
    <lineage>
        <taxon>Bacteria</taxon>
        <taxon>Pseudomonadati</taxon>
        <taxon>Pseudomonadota</taxon>
        <taxon>Betaproteobacteria</taxon>
        <taxon>Burkholderiales</taxon>
        <taxon>Burkholderiaceae</taxon>
        <taxon>Cupriavidus</taxon>
    </lineage>
</organism>
<sequence>MKALLDLFKQVQQEEQFDAIKIGLASPEKIRSWSYGEVKKPETINYRTFKPERDGLFCAKIFGPIKDYECLCGKYKRLKHRGVICEKCGVEVTLAKVRRERMGHIELAAPTAHIWFLKSLPSRLGMVLDMTLRDIERVLYFEAFVVIEPGMTPLKKSQIMSEDDYLAKCDEYGEGEFVAMMGAEGIRELLRGIDIEKQIEQIRAELQATGSEAKIKKFAKRLKVLEAFQRSGIKPEWMILEVLPVLPPELRPLVPLDGGRFATSDLNDLYRRVINRNNRLKRLLELKAPEIIVRNEKRMLQEAVDSLLDNGRRGKAMTGANKRPLKSLAEMIKGKGGRFRQNLLGKRVDYSGRSVIVVGPTLKLHQCGLPKLMALELFKPFIFHKLETMGIATTIKAAKKEVESQTPVVWDILEEVIREHPVMLNRAPTLHRLGIQAFEPVLIEGKAIQLHPLVCAAFNADFDGDQMAVHVPLSLEAQMEARTLMLASNNVLFPANGDPSIVPSQDVVLGLYYTTRDKINGKGEGMTFADISEVIRAYENKEVELASRVNVRITEYELVDKDAEGDARFAPKVTLQATTVGRAILSEILPKGLPFSVLNKPLKKKEISRLINTAFRRCGLRETVIFADKLLQSGFRLATRAGISIAIDDMLVPPAKEKIIAEASAKVKEYDKQYMSGLVTDQERYNNVVDIWGAAGDQVGKAMMEQLQHEDVVDREGKTVKQESFNSIYMMADSGARGSAAQIRQLAGMRGLMAKPDGSIIETPITANFREGLNVLQYFISTHGARKGLADTALKTANSGYLTRRLVDVTQDLVVVEDDCGTSNGVAMKALVEGGEVIEALRDRILGRVTVADVVNPETQETAIEAGTLLDEDLVELIDNIGVDEVKVRTPLSCDTRYGLCAKCYGRDLGRGVLVNSGEAVGVIAAQSIGEPGTQLTMRTFHIGGAASRAAVASSVEAKATGTVRFTATMRYVTNAKGELIVISRSGEALITDDHGRERERHKIPYGATLLVQDGQAIKAGTQLATWDALTRPIVSEYSGTIKFENVEEGVTVAKQMDEVTGLSTLVVIDAKRRTAATKGIRPQVKLLDANGQEVKIPGTDHSVTIGFQVGALITVKDGQQVHVGEVLARIPTESQKTRDITGGLPRVAELFEARSPKDAAVLAEVTGTTSFGKDTKGKQRLVITDLDGNAHEFLIAKEKQVLVHDGQVVNKGEMIVEGPADPHDILRLKGIEELAHYIVDEVQDVYRLQGVKINDKHIEVIVRQMLRRVQIVDVGDTKFIPGEQVERSELLDENDRVIAEGKRPATYENLLLGITKASLSTDSFISAASFQETTRVLTEAAIMGKTDDLRGLKENVIVGRLIPAGTGLAYHRARKAREASERERAQAIAEEEQSLFIEPPVVQATTEGEGDNV</sequence>
<gene>
    <name evidence="1" type="primary">rpoC</name>
    <name type="ordered locus">RALTA_A2957</name>
</gene>
<evidence type="ECO:0000255" key="1">
    <source>
        <dbReference type="HAMAP-Rule" id="MF_01322"/>
    </source>
</evidence>
<dbReference type="EC" id="2.7.7.6" evidence="1"/>
<dbReference type="EMBL" id="CU633749">
    <property type="protein sequence ID" value="CAQ70880.1"/>
    <property type="molecule type" value="Genomic_DNA"/>
</dbReference>
<dbReference type="RefSeq" id="WP_012354149.1">
    <property type="nucleotide sequence ID" value="NC_010528.1"/>
</dbReference>
<dbReference type="SMR" id="B3R7T5"/>
<dbReference type="GeneID" id="29761689"/>
<dbReference type="KEGG" id="cti:RALTA_A2957"/>
<dbReference type="eggNOG" id="COG0086">
    <property type="taxonomic scope" value="Bacteria"/>
</dbReference>
<dbReference type="HOGENOM" id="CLU_000524_3_1_4"/>
<dbReference type="BioCyc" id="CTAI977880:RALTA_RS14415-MONOMER"/>
<dbReference type="Proteomes" id="UP000001692">
    <property type="component" value="Chromosome 1"/>
</dbReference>
<dbReference type="GO" id="GO:0000428">
    <property type="term" value="C:DNA-directed RNA polymerase complex"/>
    <property type="evidence" value="ECO:0007669"/>
    <property type="project" value="UniProtKB-KW"/>
</dbReference>
<dbReference type="GO" id="GO:0003677">
    <property type="term" value="F:DNA binding"/>
    <property type="evidence" value="ECO:0007669"/>
    <property type="project" value="UniProtKB-UniRule"/>
</dbReference>
<dbReference type="GO" id="GO:0003899">
    <property type="term" value="F:DNA-directed RNA polymerase activity"/>
    <property type="evidence" value="ECO:0007669"/>
    <property type="project" value="UniProtKB-UniRule"/>
</dbReference>
<dbReference type="GO" id="GO:0000287">
    <property type="term" value="F:magnesium ion binding"/>
    <property type="evidence" value="ECO:0007669"/>
    <property type="project" value="UniProtKB-UniRule"/>
</dbReference>
<dbReference type="GO" id="GO:0008270">
    <property type="term" value="F:zinc ion binding"/>
    <property type="evidence" value="ECO:0007669"/>
    <property type="project" value="UniProtKB-UniRule"/>
</dbReference>
<dbReference type="GO" id="GO:0006351">
    <property type="term" value="P:DNA-templated transcription"/>
    <property type="evidence" value="ECO:0007669"/>
    <property type="project" value="UniProtKB-UniRule"/>
</dbReference>
<dbReference type="CDD" id="cd02655">
    <property type="entry name" value="RNAP_beta'_C"/>
    <property type="match status" value="1"/>
</dbReference>
<dbReference type="CDD" id="cd01609">
    <property type="entry name" value="RNAP_beta'_N"/>
    <property type="match status" value="1"/>
</dbReference>
<dbReference type="FunFam" id="1.10.132.30:FF:000003">
    <property type="entry name" value="DNA-directed RNA polymerase subunit beta"/>
    <property type="match status" value="1"/>
</dbReference>
<dbReference type="FunFam" id="1.10.150.390:FF:000002">
    <property type="entry name" value="DNA-directed RNA polymerase subunit beta"/>
    <property type="match status" value="1"/>
</dbReference>
<dbReference type="FunFam" id="4.10.860.120:FF:000001">
    <property type="entry name" value="DNA-directed RNA polymerase subunit beta"/>
    <property type="match status" value="1"/>
</dbReference>
<dbReference type="Gene3D" id="1.10.132.30">
    <property type="match status" value="1"/>
</dbReference>
<dbReference type="Gene3D" id="1.10.150.390">
    <property type="match status" value="1"/>
</dbReference>
<dbReference type="Gene3D" id="1.10.1790.20">
    <property type="match status" value="1"/>
</dbReference>
<dbReference type="Gene3D" id="1.10.40.90">
    <property type="match status" value="1"/>
</dbReference>
<dbReference type="Gene3D" id="2.40.40.20">
    <property type="match status" value="1"/>
</dbReference>
<dbReference type="Gene3D" id="2.40.50.100">
    <property type="match status" value="3"/>
</dbReference>
<dbReference type="Gene3D" id="4.10.860.120">
    <property type="entry name" value="RNA polymerase II, clamp domain"/>
    <property type="match status" value="1"/>
</dbReference>
<dbReference type="Gene3D" id="1.10.274.100">
    <property type="entry name" value="RNA polymerase Rpb1, domain 3"/>
    <property type="match status" value="1"/>
</dbReference>
<dbReference type="HAMAP" id="MF_01322">
    <property type="entry name" value="RNApol_bact_RpoC"/>
    <property type="match status" value="1"/>
</dbReference>
<dbReference type="InterPro" id="IPR045867">
    <property type="entry name" value="DNA-dir_RpoC_beta_prime"/>
</dbReference>
<dbReference type="InterPro" id="IPR012754">
    <property type="entry name" value="DNA-dir_RpoC_beta_prime_bact"/>
</dbReference>
<dbReference type="InterPro" id="IPR000722">
    <property type="entry name" value="RNA_pol_asu"/>
</dbReference>
<dbReference type="InterPro" id="IPR006592">
    <property type="entry name" value="RNA_pol_N"/>
</dbReference>
<dbReference type="InterPro" id="IPR007080">
    <property type="entry name" value="RNA_pol_Rpb1_1"/>
</dbReference>
<dbReference type="InterPro" id="IPR007066">
    <property type="entry name" value="RNA_pol_Rpb1_3"/>
</dbReference>
<dbReference type="InterPro" id="IPR042102">
    <property type="entry name" value="RNA_pol_Rpb1_3_sf"/>
</dbReference>
<dbReference type="InterPro" id="IPR007083">
    <property type="entry name" value="RNA_pol_Rpb1_4"/>
</dbReference>
<dbReference type="InterPro" id="IPR007081">
    <property type="entry name" value="RNA_pol_Rpb1_5"/>
</dbReference>
<dbReference type="InterPro" id="IPR044893">
    <property type="entry name" value="RNA_pol_Rpb1_clamp_domain"/>
</dbReference>
<dbReference type="InterPro" id="IPR038120">
    <property type="entry name" value="Rpb1_funnel_sf"/>
</dbReference>
<dbReference type="NCBIfam" id="TIGR02386">
    <property type="entry name" value="rpoC_TIGR"/>
    <property type="match status" value="1"/>
</dbReference>
<dbReference type="PANTHER" id="PTHR19376">
    <property type="entry name" value="DNA-DIRECTED RNA POLYMERASE"/>
    <property type="match status" value="1"/>
</dbReference>
<dbReference type="PANTHER" id="PTHR19376:SF54">
    <property type="entry name" value="DNA-DIRECTED RNA POLYMERASE SUBUNIT BETA"/>
    <property type="match status" value="1"/>
</dbReference>
<dbReference type="Pfam" id="PF04997">
    <property type="entry name" value="RNA_pol_Rpb1_1"/>
    <property type="match status" value="1"/>
</dbReference>
<dbReference type="Pfam" id="PF00623">
    <property type="entry name" value="RNA_pol_Rpb1_2"/>
    <property type="match status" value="1"/>
</dbReference>
<dbReference type="Pfam" id="PF04983">
    <property type="entry name" value="RNA_pol_Rpb1_3"/>
    <property type="match status" value="1"/>
</dbReference>
<dbReference type="Pfam" id="PF05000">
    <property type="entry name" value="RNA_pol_Rpb1_4"/>
    <property type="match status" value="1"/>
</dbReference>
<dbReference type="Pfam" id="PF04998">
    <property type="entry name" value="RNA_pol_Rpb1_5"/>
    <property type="match status" value="1"/>
</dbReference>
<dbReference type="SMART" id="SM00663">
    <property type="entry name" value="RPOLA_N"/>
    <property type="match status" value="1"/>
</dbReference>
<dbReference type="SUPFAM" id="SSF64484">
    <property type="entry name" value="beta and beta-prime subunits of DNA dependent RNA-polymerase"/>
    <property type="match status" value="1"/>
</dbReference>
<name>RPOC_CUPTR</name>
<comment type="function">
    <text evidence="1">DNA-dependent RNA polymerase catalyzes the transcription of DNA into RNA using the four ribonucleoside triphosphates as substrates.</text>
</comment>
<comment type="catalytic activity">
    <reaction evidence="1">
        <text>RNA(n) + a ribonucleoside 5'-triphosphate = RNA(n+1) + diphosphate</text>
        <dbReference type="Rhea" id="RHEA:21248"/>
        <dbReference type="Rhea" id="RHEA-COMP:14527"/>
        <dbReference type="Rhea" id="RHEA-COMP:17342"/>
        <dbReference type="ChEBI" id="CHEBI:33019"/>
        <dbReference type="ChEBI" id="CHEBI:61557"/>
        <dbReference type="ChEBI" id="CHEBI:140395"/>
        <dbReference type="EC" id="2.7.7.6"/>
    </reaction>
</comment>
<comment type="cofactor">
    <cofactor evidence="1">
        <name>Mg(2+)</name>
        <dbReference type="ChEBI" id="CHEBI:18420"/>
    </cofactor>
    <text evidence="1">Binds 1 Mg(2+) ion per subunit.</text>
</comment>
<comment type="cofactor">
    <cofactor evidence="1">
        <name>Zn(2+)</name>
        <dbReference type="ChEBI" id="CHEBI:29105"/>
    </cofactor>
    <text evidence="1">Binds 2 Zn(2+) ions per subunit.</text>
</comment>
<comment type="subunit">
    <text evidence="1">The RNAP catalytic core consists of 2 alpha, 1 beta, 1 beta' and 1 omega subunit. When a sigma factor is associated with the core the holoenzyme is formed, which can initiate transcription.</text>
</comment>
<comment type="similarity">
    <text evidence="1">Belongs to the RNA polymerase beta' chain family.</text>
</comment>